<gene>
    <name type="primary">M</name>
</gene>
<protein>
    <recommendedName>
        <fullName>Matrix protein</fullName>
    </recommendedName>
    <alternativeName>
        <fullName evidence="1">M protein</fullName>
    </alternativeName>
</protein>
<dbReference type="EMBL" id="D01012">
    <property type="protein sequence ID" value="BAA00812.1"/>
    <property type="molecule type" value="mRNA"/>
</dbReference>
<dbReference type="EMBL" id="AF295543">
    <property type="protein sequence ID" value="AAL49396.1"/>
    <property type="molecule type" value="Genomic_RNA"/>
</dbReference>
<dbReference type="EMBL" id="AF295544">
    <property type="protein sequence ID" value="AAL49407.1"/>
    <property type="molecule type" value="Genomic_RNA"/>
</dbReference>
<dbReference type="PIR" id="JQ1178">
    <property type="entry name" value="MFNZBR"/>
</dbReference>
<dbReference type="SMR" id="P24615"/>
<dbReference type="Proteomes" id="UP000007616">
    <property type="component" value="Genome"/>
</dbReference>
<dbReference type="GO" id="GO:0030430">
    <property type="term" value="C:host cell cytoplasm"/>
    <property type="evidence" value="ECO:0007669"/>
    <property type="project" value="UniProtKB-SubCell"/>
</dbReference>
<dbReference type="GO" id="GO:0042025">
    <property type="term" value="C:host cell nucleus"/>
    <property type="evidence" value="ECO:0007669"/>
    <property type="project" value="UniProtKB-SubCell"/>
</dbReference>
<dbReference type="GO" id="GO:0020002">
    <property type="term" value="C:host cell plasma membrane"/>
    <property type="evidence" value="ECO:0007669"/>
    <property type="project" value="UniProtKB-SubCell"/>
</dbReference>
<dbReference type="GO" id="GO:0016020">
    <property type="term" value="C:membrane"/>
    <property type="evidence" value="ECO:0007669"/>
    <property type="project" value="UniProtKB-KW"/>
</dbReference>
<dbReference type="GO" id="GO:0019031">
    <property type="term" value="C:viral envelope"/>
    <property type="evidence" value="ECO:0007669"/>
    <property type="project" value="InterPro"/>
</dbReference>
<dbReference type="GO" id="GO:0039660">
    <property type="term" value="F:structural constituent of virion"/>
    <property type="evidence" value="ECO:0007669"/>
    <property type="project" value="UniProtKB-KW"/>
</dbReference>
<dbReference type="GO" id="GO:0019068">
    <property type="term" value="P:virion assembly"/>
    <property type="evidence" value="ECO:0007669"/>
    <property type="project" value="InterPro"/>
</dbReference>
<dbReference type="Gene3D" id="2.70.20.30">
    <property type="entry name" value="HRSV-S2 matrix protein, N-terminal domain"/>
    <property type="match status" value="1"/>
</dbReference>
<dbReference type="InterPro" id="IPR055461">
    <property type="entry name" value="Matrix_Pneumo_C"/>
</dbReference>
<dbReference type="InterPro" id="IPR005056">
    <property type="entry name" value="MATRX_N_pneumovirus"/>
</dbReference>
<dbReference type="InterPro" id="IPR043062">
    <property type="entry name" value="Pneu_matrix_N"/>
</dbReference>
<dbReference type="Pfam" id="PF23766">
    <property type="entry name" value="Matrix_Pneumo_C"/>
    <property type="match status" value="1"/>
</dbReference>
<dbReference type="Pfam" id="PF03393">
    <property type="entry name" value="Matrix_Pneumo_N"/>
    <property type="match status" value="1"/>
</dbReference>
<sequence>METYVNKLHEGSIYTAAVQYNVIEKDDDPASLTIWVPMFQSSISADMLIKELINVNILVRQISTPKGPSLKIMINSRSAVLAQMPSKFTISANVSLDERSKLAYDITTPCEIKACSLTCLKVKNMLTTVKDLTMKTFNPTHEIIALCEFENIMTSKRVVIPTFLRSINVKAKDLDSLENIATTEFKNAITNAKIIPYAGLVLVITVTDNKGAFKYIKPQSQFIVDLGAYLEKESIYYVTTNWKHTATKFSIKPIED</sequence>
<feature type="chain" id="PRO_0000142746" description="Matrix protein">
    <location>
        <begin position="1"/>
        <end position="256"/>
    </location>
</feature>
<feature type="region of interest" description="Interaction with M2-1" evidence="1">
    <location>
        <begin position="1"/>
        <end position="110"/>
    </location>
</feature>
<feature type="region of interest" description="Nuclear targeting and binding to host importin KPNB1" evidence="1">
    <location>
        <begin position="110"/>
        <end position="183"/>
    </location>
</feature>
<feature type="short sequence motif" description="Nuclear export signal" evidence="1">
    <location>
        <begin position="194"/>
        <end position="206"/>
    </location>
</feature>
<feature type="modified residue" description="Phosphothreonine" evidence="1">
    <location>
        <position position="205"/>
    </location>
</feature>
<feature type="sequence variant" description="In strain: ATCC 51908.">
    <original>I</original>
    <variation>T</variation>
    <location>
        <position position="13"/>
    </location>
</feature>
<feature type="sequence variant" description="In strain: ATCC 51908.">
    <original>M</original>
    <variation>L</variation>
    <location>
        <position position="47"/>
    </location>
</feature>
<feature type="sequence variant" description="In strain: ATCC 51908.">
    <original>P</original>
    <variation>L</variation>
    <location>
        <position position="65"/>
    </location>
</feature>
<comment type="function">
    <text evidence="1">Plays a crucial role in virus assembly into filaments and budding. Early in infection, localizes in the nucleus where it may inhibit host cell transcription. Later in infection, traffics to the cytoplasm through the action of host CRM1 to associate with inclusion bodies, the site of viral transcription and replication. During virus assembly and budding, acts as a bridge between the nucleocapsid and the lipid bilayer.</text>
</comment>
<comment type="subunit">
    <text evidence="1">Forms dimers. Forms higher-order oligomers. Interacts with glycoprotein G (via N-terminus). Interacts with protein M2-1; this interaction directs the matrix protein localization to cytoplasmic inclusions comprising viral proteins L, N, P, and M2-1 and mediates the matrix protein association with the nucleocapsid. Interacts with host KPNB1; this interaction mediates nuclear import of the matrix protein early during infection.</text>
</comment>
<comment type="subcellular location">
    <subcellularLocation>
        <location evidence="1">Virion</location>
    </subcellularLocation>
    <subcellularLocation>
        <location evidence="1">Host cytoplasm</location>
    </subcellularLocation>
    <subcellularLocation>
        <location evidence="1">Host nucleus</location>
    </subcellularLocation>
    <subcellularLocation>
        <location evidence="1">Host cell membrane</location>
        <topology evidence="1">Peripheral membrane protein</topology>
        <orientation evidence="1">Cytoplasmic side</orientation>
    </subcellularLocation>
    <text evidence="1">In the cytoplasm, associates with inclusion bodies. During bud formation, associates at the inner side of the plasma membrane of infected cells.</text>
</comment>
<comment type="PTM">
    <text evidence="1">Phosphorylation is important for oligomerization.</text>
</comment>
<comment type="similarity">
    <text evidence="2">Belongs to the pneumovirinae M protein family.</text>
</comment>
<name>MATRX_BRSVA</name>
<proteinExistence type="evidence at transcript level"/>
<organismHost>
    <name type="scientific">Bos taurus</name>
    <name type="common">Bovine</name>
    <dbReference type="NCBI Taxonomy" id="9913"/>
</organismHost>
<organism>
    <name type="scientific">Bovine respiratory syncytial virus (strain A51908)</name>
    <name type="common">BRS</name>
    <dbReference type="NCBI Taxonomy" id="11247"/>
    <lineage>
        <taxon>Viruses</taxon>
        <taxon>Riboviria</taxon>
        <taxon>Orthornavirae</taxon>
        <taxon>Negarnaviricota</taxon>
        <taxon>Haploviricotina</taxon>
        <taxon>Monjiviricetes</taxon>
        <taxon>Mononegavirales</taxon>
        <taxon>Pneumoviridae</taxon>
        <taxon>Orthopneumovirus</taxon>
        <taxon>Orthopneumovirus bovis</taxon>
        <taxon>bovine respiratory syncytial virus</taxon>
    </lineage>
</organism>
<keyword id="KW-1032">Host cell membrane</keyword>
<keyword id="KW-1035">Host cytoplasm</keyword>
<keyword id="KW-1043">Host membrane</keyword>
<keyword id="KW-1048">Host nucleus</keyword>
<keyword id="KW-0945">Host-virus interaction</keyword>
<keyword id="KW-0472">Membrane</keyword>
<keyword id="KW-0597">Phosphoprotein</keyword>
<keyword id="KW-1185">Reference proteome</keyword>
<keyword id="KW-0468">Viral matrix protein</keyword>
<keyword id="KW-0946">Virion</keyword>
<accession>P24615</accession>
<accession>Q77KZ0</accession>
<accession>Q77L00</accession>
<reference key="1">
    <citation type="journal article" date="1991" name="J. Gen. Virol.">
        <title>Nucleotide sequence analysis of a matrix and small hydrophobic protein dicistronic mRNA of bovine respiratory syncytial virus demonstrates extensive sequence divergence of the small hydrophobic protein from that of human respiratory syncytial virus.</title>
        <authorList>
            <person name="Samal S.K."/>
            <person name="Zamora M."/>
        </authorList>
    </citation>
    <scope>NUCLEOTIDE SEQUENCE [MRNA]</scope>
</reference>
<reference key="2">
    <citation type="journal article" date="2001" name="Virus Genes">
        <title>Rescue of bovine respiratory syncytial virus from cloned cDNA: entire genome sequence of BRSV strain A51908.</title>
        <authorList>
            <person name="Yunus A.S."/>
            <person name="Khattar S.K."/>
            <person name="Collins P.L."/>
            <person name="Samal S.K."/>
        </authorList>
    </citation>
    <scope>NUCLEOTIDE SEQUENCE [GENOMIC RNA]</scope>
    <source>
        <strain>A51908</strain>
        <strain>ATCC 51908</strain>
    </source>
</reference>
<evidence type="ECO:0000250" key="1">
    <source>
        <dbReference type="UniProtKB" id="P0DOE7"/>
    </source>
</evidence>
<evidence type="ECO:0000305" key="2"/>